<organism>
    <name type="scientific">Helicobacter pylori (strain ATCC 700392 / 26695)</name>
    <name type="common">Campylobacter pylori</name>
    <dbReference type="NCBI Taxonomy" id="85962"/>
    <lineage>
        <taxon>Bacteria</taxon>
        <taxon>Pseudomonadati</taxon>
        <taxon>Campylobacterota</taxon>
        <taxon>Epsilonproteobacteria</taxon>
        <taxon>Campylobacterales</taxon>
        <taxon>Helicobacteraceae</taxon>
        <taxon>Helicobacter</taxon>
    </lineage>
</organism>
<accession>P64101</accession>
<accession>O25987</accession>
<reference key="1">
    <citation type="journal article" date="1997" name="Nature">
        <title>The complete genome sequence of the gastric pathogen Helicobacter pylori.</title>
        <authorList>
            <person name="Tomb J.-F."/>
            <person name="White O."/>
            <person name="Kerlavage A.R."/>
            <person name="Clayton R.A."/>
            <person name="Sutton G.G."/>
            <person name="Fleischmann R.D."/>
            <person name="Ketchum K.A."/>
            <person name="Klenk H.-P."/>
            <person name="Gill S.R."/>
            <person name="Dougherty B.A."/>
            <person name="Nelson K.E."/>
            <person name="Quackenbush J."/>
            <person name="Zhou L."/>
            <person name="Kirkness E.F."/>
            <person name="Peterson S.N."/>
            <person name="Loftus B.J."/>
            <person name="Richardson D.L."/>
            <person name="Dodson R.J."/>
            <person name="Khalak H.G."/>
            <person name="Glodek A."/>
            <person name="McKenney K."/>
            <person name="FitzGerald L.M."/>
            <person name="Lee N."/>
            <person name="Adams M.D."/>
            <person name="Hickey E.K."/>
            <person name="Berg D.E."/>
            <person name="Gocayne J.D."/>
            <person name="Utterback T.R."/>
            <person name="Peterson J.D."/>
            <person name="Kelley J.M."/>
            <person name="Cotton M.D."/>
            <person name="Weidman J.F."/>
            <person name="Fujii C."/>
            <person name="Bowman C."/>
            <person name="Watthey L."/>
            <person name="Wallin E."/>
            <person name="Hayes W.S."/>
            <person name="Borodovsky M."/>
            <person name="Karp P.D."/>
            <person name="Smith H.O."/>
            <person name="Fraser C.M."/>
            <person name="Venter J.C."/>
        </authorList>
    </citation>
    <scope>NUCLEOTIDE SEQUENCE [LARGE SCALE GENOMIC DNA]</scope>
    <source>
        <strain>ATCC 700392 / 26695</strain>
    </source>
</reference>
<evidence type="ECO:0000255" key="1"/>
<evidence type="ECO:0000305" key="2"/>
<protein>
    <recommendedName>
        <fullName>Putative biopolymer transport protein ExbD-like 2</fullName>
    </recommendedName>
</protein>
<gene>
    <name type="ordered locus">HP_1446</name>
</gene>
<comment type="subcellular location">
    <subcellularLocation>
        <location evidence="2">Cell inner membrane</location>
        <topology evidence="2">Single-pass type II membrane protein</topology>
    </subcellularLocation>
</comment>
<comment type="similarity">
    <text evidence="2">Belongs to the ExbD/TolR family.</text>
</comment>
<proteinExistence type="inferred from homology"/>
<keyword id="KW-0997">Cell inner membrane</keyword>
<keyword id="KW-1003">Cell membrane</keyword>
<keyword id="KW-0472">Membrane</keyword>
<keyword id="KW-0653">Protein transport</keyword>
<keyword id="KW-1185">Reference proteome</keyword>
<keyword id="KW-0812">Transmembrane</keyword>
<keyword id="KW-1133">Transmembrane helix</keyword>
<keyword id="KW-0813">Transport</keyword>
<name>EXDL2_HELPY</name>
<sequence length="133" mass="15042">MKKVESMNVVPFIDIMLVLLVIVLTTASFVQTSKLPISIPQVDKDSTDSKDVLDKKQVTIAISNKGSFYFDDKEISFENLKHKVSTLAKDTPIVLQGDKKSNLDNFIKVVDLLQTNNLKQLYILVEDKKNQKN</sequence>
<dbReference type="EMBL" id="AE000511">
    <property type="protein sequence ID" value="AAD08484.1"/>
    <property type="molecule type" value="Genomic_DNA"/>
</dbReference>
<dbReference type="PIR" id="F64700">
    <property type="entry name" value="F64700"/>
</dbReference>
<dbReference type="RefSeq" id="NP_208237.1">
    <property type="nucleotide sequence ID" value="NC_000915.1"/>
</dbReference>
<dbReference type="RefSeq" id="WP_000755082.1">
    <property type="nucleotide sequence ID" value="NC_018939.1"/>
</dbReference>
<dbReference type="SMR" id="P64101"/>
<dbReference type="IntAct" id="P64101">
    <property type="interactions" value="1"/>
</dbReference>
<dbReference type="MINT" id="P64101"/>
<dbReference type="STRING" id="85962.HP_1446"/>
<dbReference type="PaxDb" id="85962-C694_07490"/>
<dbReference type="EnsemblBacteria" id="AAD08484">
    <property type="protein sequence ID" value="AAD08484"/>
    <property type="gene ID" value="HP_1446"/>
</dbReference>
<dbReference type="KEGG" id="heo:C694_07490"/>
<dbReference type="KEGG" id="hpy:HP_1446"/>
<dbReference type="PATRIC" id="fig|85962.47.peg.1555"/>
<dbReference type="eggNOG" id="COG0848">
    <property type="taxonomic scope" value="Bacteria"/>
</dbReference>
<dbReference type="InParanoid" id="P64101"/>
<dbReference type="OrthoDB" id="14324at2"/>
<dbReference type="PhylomeDB" id="P64101"/>
<dbReference type="Proteomes" id="UP000000429">
    <property type="component" value="Chromosome"/>
</dbReference>
<dbReference type="GO" id="GO:0005886">
    <property type="term" value="C:plasma membrane"/>
    <property type="evidence" value="ECO:0000318"/>
    <property type="project" value="GO_Central"/>
</dbReference>
<dbReference type="GO" id="GO:0022857">
    <property type="term" value="F:transmembrane transporter activity"/>
    <property type="evidence" value="ECO:0007669"/>
    <property type="project" value="InterPro"/>
</dbReference>
<dbReference type="GO" id="GO:0015031">
    <property type="term" value="P:protein transport"/>
    <property type="evidence" value="ECO:0007669"/>
    <property type="project" value="UniProtKB-KW"/>
</dbReference>
<dbReference type="Gene3D" id="3.30.420.270">
    <property type="match status" value="1"/>
</dbReference>
<dbReference type="InterPro" id="IPR003400">
    <property type="entry name" value="ExbD"/>
</dbReference>
<dbReference type="PANTHER" id="PTHR30558:SF12">
    <property type="entry name" value="BIOPOLYMER TRANSPORT PROTEIN EXBD"/>
    <property type="match status" value="1"/>
</dbReference>
<dbReference type="PANTHER" id="PTHR30558">
    <property type="entry name" value="EXBD MEMBRANE COMPONENT OF PMF-DRIVEN MACROMOLECULE IMPORT SYSTEM"/>
    <property type="match status" value="1"/>
</dbReference>
<dbReference type="Pfam" id="PF02472">
    <property type="entry name" value="ExbD"/>
    <property type="match status" value="1"/>
</dbReference>
<feature type="chain" id="PRO_0000129138" description="Putative biopolymer transport protein ExbD-like 2">
    <location>
        <begin position="1"/>
        <end position="133"/>
    </location>
</feature>
<feature type="topological domain" description="Cytoplasmic" evidence="1">
    <location>
        <begin position="1"/>
        <end position="9"/>
    </location>
</feature>
<feature type="transmembrane region" description="Helical" evidence="1">
    <location>
        <begin position="10"/>
        <end position="30"/>
    </location>
</feature>
<feature type="topological domain" description="Periplasmic" evidence="1">
    <location>
        <begin position="31"/>
        <end position="133"/>
    </location>
</feature>